<gene>
    <name evidence="1" type="primary">flgH</name>
    <name type="ordered locus">BAB2_0156</name>
</gene>
<feature type="signal peptide" evidence="1">
    <location>
        <begin position="1"/>
        <end position="16"/>
    </location>
</feature>
<feature type="chain" id="PRO_0000236815" description="Flagellar L-ring protein">
    <location>
        <begin position="17"/>
        <end position="238"/>
    </location>
</feature>
<feature type="lipid moiety-binding region" description="N-palmitoyl cysteine" evidence="1">
    <location>
        <position position="17"/>
    </location>
</feature>
<feature type="lipid moiety-binding region" description="S-diacylglycerol cysteine" evidence="1">
    <location>
        <position position="17"/>
    </location>
</feature>
<name>FLGH_BRUA2</name>
<dbReference type="EMBL" id="AM040265">
    <property type="protein sequence ID" value="CAJ12322.1"/>
    <property type="status" value="ALT_INIT"/>
    <property type="molecule type" value="Genomic_DNA"/>
</dbReference>
<dbReference type="SMR" id="Q2YJ67"/>
<dbReference type="STRING" id="359391.BAB2_0156"/>
<dbReference type="KEGG" id="bmf:BAB2_0156"/>
<dbReference type="HOGENOM" id="CLU_069313_1_2_5"/>
<dbReference type="Proteomes" id="UP000002719">
    <property type="component" value="Chromosome II"/>
</dbReference>
<dbReference type="GO" id="GO:0009427">
    <property type="term" value="C:bacterial-type flagellum basal body, distal rod, L ring"/>
    <property type="evidence" value="ECO:0007669"/>
    <property type="project" value="InterPro"/>
</dbReference>
<dbReference type="GO" id="GO:0009279">
    <property type="term" value="C:cell outer membrane"/>
    <property type="evidence" value="ECO:0007669"/>
    <property type="project" value="UniProtKB-SubCell"/>
</dbReference>
<dbReference type="GO" id="GO:0003774">
    <property type="term" value="F:cytoskeletal motor activity"/>
    <property type="evidence" value="ECO:0007669"/>
    <property type="project" value="InterPro"/>
</dbReference>
<dbReference type="GO" id="GO:0071973">
    <property type="term" value="P:bacterial-type flagellum-dependent cell motility"/>
    <property type="evidence" value="ECO:0007669"/>
    <property type="project" value="InterPro"/>
</dbReference>
<dbReference type="HAMAP" id="MF_00415">
    <property type="entry name" value="FlgH"/>
    <property type="match status" value="1"/>
</dbReference>
<dbReference type="InterPro" id="IPR000527">
    <property type="entry name" value="Flag_Lring"/>
</dbReference>
<dbReference type="NCBIfam" id="NF001305">
    <property type="entry name" value="PRK00249.1-5"/>
    <property type="match status" value="1"/>
</dbReference>
<dbReference type="PANTHER" id="PTHR34933">
    <property type="entry name" value="FLAGELLAR L-RING PROTEIN"/>
    <property type="match status" value="1"/>
</dbReference>
<dbReference type="PANTHER" id="PTHR34933:SF1">
    <property type="entry name" value="FLAGELLAR L-RING PROTEIN"/>
    <property type="match status" value="1"/>
</dbReference>
<dbReference type="Pfam" id="PF02107">
    <property type="entry name" value="FlgH"/>
    <property type="match status" value="1"/>
</dbReference>
<dbReference type="PRINTS" id="PR01008">
    <property type="entry name" value="FLGLRINGFLGH"/>
</dbReference>
<dbReference type="PROSITE" id="PS51257">
    <property type="entry name" value="PROKAR_LIPOPROTEIN"/>
    <property type="match status" value="1"/>
</dbReference>
<protein>
    <recommendedName>
        <fullName evidence="1">Flagellar L-ring protein</fullName>
    </recommendedName>
    <alternativeName>
        <fullName evidence="1">Basal body L-ring protein</fullName>
    </alternativeName>
</protein>
<accession>Q2YJ67</accession>
<evidence type="ECO:0000255" key="1">
    <source>
        <dbReference type="HAMAP-Rule" id="MF_00415"/>
    </source>
</evidence>
<evidence type="ECO:0000305" key="2"/>
<comment type="function">
    <text evidence="1">Assembles around the rod to form the L-ring and probably protects the motor/basal body from shearing forces during rotation.</text>
</comment>
<comment type="subunit">
    <text evidence="1">The basal body constitutes a major portion of the flagellar organelle and consists of four rings (L,P,S, and M) mounted on a central rod.</text>
</comment>
<comment type="subcellular location">
    <subcellularLocation>
        <location evidence="1">Cell outer membrane</location>
        <topology evidence="1">Lipid-anchor</topology>
    </subcellularLocation>
    <subcellularLocation>
        <location evidence="1">Bacterial flagellum basal body</location>
    </subcellularLocation>
</comment>
<comment type="similarity">
    <text evidence="1">Belongs to the FlgH family.</text>
</comment>
<comment type="sequence caution" evidence="2">
    <conflict type="erroneous initiation">
        <sequence resource="EMBL-CDS" id="CAJ12322"/>
    </conflict>
</comment>
<keyword id="KW-0975">Bacterial flagellum</keyword>
<keyword id="KW-0998">Cell outer membrane</keyword>
<keyword id="KW-0449">Lipoprotein</keyword>
<keyword id="KW-0472">Membrane</keyword>
<keyword id="KW-0564">Palmitate</keyword>
<keyword id="KW-1185">Reference proteome</keyword>
<keyword id="KW-0732">Signal</keyword>
<proteinExistence type="inferred from homology"/>
<organism>
    <name type="scientific">Brucella abortus (strain 2308)</name>
    <dbReference type="NCBI Taxonomy" id="359391"/>
    <lineage>
        <taxon>Bacteria</taxon>
        <taxon>Pseudomonadati</taxon>
        <taxon>Pseudomonadota</taxon>
        <taxon>Alphaproteobacteria</taxon>
        <taxon>Hyphomicrobiales</taxon>
        <taxon>Brucellaceae</taxon>
        <taxon>Brucella/Ochrobactrum group</taxon>
        <taxon>Brucella</taxon>
    </lineage>
</organism>
<sequence length="238" mass="25471">MNKAILAVAMVLLLAGCATKPEEIGRAPDLSPVAAHLGMQNNPQFNGYPARPGKASYSLWDQRSTNFFKDPRAATPGDVLTVIISINDRANLDNKTDRERVSKGIYGGGGSFATSSITGAAAGGDMDASVNTHSDSKSKGKGTIERSEDIRLQIAAIVTDTLPNGNLIIRGSQEVRVNNELRVLNVAGVVRPRDISGNNTISYDKIAEARISYGGRGRLSEIQQPPYGQQILDQFSPF</sequence>
<reference key="1">
    <citation type="journal article" date="2005" name="Infect. Immun.">
        <title>Whole-genome analyses of speciation events in pathogenic Brucellae.</title>
        <authorList>
            <person name="Chain P.S."/>
            <person name="Comerci D.J."/>
            <person name="Tolmasky M.E."/>
            <person name="Larimer F.W."/>
            <person name="Malfatti S.A."/>
            <person name="Vergez L.M."/>
            <person name="Aguero F."/>
            <person name="Land M.L."/>
            <person name="Ugalde R.A."/>
            <person name="Garcia E."/>
        </authorList>
    </citation>
    <scope>NUCLEOTIDE SEQUENCE [LARGE SCALE GENOMIC DNA]</scope>
    <source>
        <strain>2308</strain>
    </source>
</reference>